<dbReference type="EC" id="4.6.1.12" evidence="1"/>
<dbReference type="EMBL" id="CU928164">
    <property type="protein sequence ID" value="CAR19054.1"/>
    <property type="molecule type" value="Genomic_DNA"/>
</dbReference>
<dbReference type="RefSeq" id="WP_001219242.1">
    <property type="nucleotide sequence ID" value="NC_011750.1"/>
</dbReference>
<dbReference type="RefSeq" id="YP_002408866.1">
    <property type="nucleotide sequence ID" value="NC_011750.1"/>
</dbReference>
<dbReference type="SMR" id="B7NT90"/>
<dbReference type="STRING" id="585057.ECIAI39_2935"/>
<dbReference type="GeneID" id="93779260"/>
<dbReference type="KEGG" id="ect:ECIAI39_2935"/>
<dbReference type="PATRIC" id="fig|585057.6.peg.3044"/>
<dbReference type="HOGENOM" id="CLU_084630_2_0_6"/>
<dbReference type="UniPathway" id="UPA00056">
    <property type="reaction ID" value="UER00095"/>
</dbReference>
<dbReference type="Proteomes" id="UP000000749">
    <property type="component" value="Chromosome"/>
</dbReference>
<dbReference type="GO" id="GO:0008685">
    <property type="term" value="F:2-C-methyl-D-erythritol 2,4-cyclodiphosphate synthase activity"/>
    <property type="evidence" value="ECO:0007669"/>
    <property type="project" value="UniProtKB-UniRule"/>
</dbReference>
<dbReference type="GO" id="GO:0046872">
    <property type="term" value="F:metal ion binding"/>
    <property type="evidence" value="ECO:0007669"/>
    <property type="project" value="UniProtKB-KW"/>
</dbReference>
<dbReference type="GO" id="GO:0019288">
    <property type="term" value="P:isopentenyl diphosphate biosynthetic process, methylerythritol 4-phosphate pathway"/>
    <property type="evidence" value="ECO:0007669"/>
    <property type="project" value="UniProtKB-UniRule"/>
</dbReference>
<dbReference type="GO" id="GO:0016114">
    <property type="term" value="P:terpenoid biosynthetic process"/>
    <property type="evidence" value="ECO:0007669"/>
    <property type="project" value="InterPro"/>
</dbReference>
<dbReference type="CDD" id="cd00554">
    <property type="entry name" value="MECDP_synthase"/>
    <property type="match status" value="1"/>
</dbReference>
<dbReference type="FunFam" id="3.30.1330.50:FF:000001">
    <property type="entry name" value="2-C-methyl-D-erythritol 2,4-cyclodiphosphate synthase"/>
    <property type="match status" value="1"/>
</dbReference>
<dbReference type="Gene3D" id="3.30.1330.50">
    <property type="entry name" value="2-C-methyl-D-erythritol 2,4-cyclodiphosphate synthase"/>
    <property type="match status" value="1"/>
</dbReference>
<dbReference type="HAMAP" id="MF_00107">
    <property type="entry name" value="IspF"/>
    <property type="match status" value="1"/>
</dbReference>
<dbReference type="InterPro" id="IPR003526">
    <property type="entry name" value="MECDP_synthase"/>
</dbReference>
<dbReference type="InterPro" id="IPR020555">
    <property type="entry name" value="MECDP_synthase_CS"/>
</dbReference>
<dbReference type="InterPro" id="IPR036571">
    <property type="entry name" value="MECDP_synthase_sf"/>
</dbReference>
<dbReference type="NCBIfam" id="TIGR00151">
    <property type="entry name" value="ispF"/>
    <property type="match status" value="1"/>
</dbReference>
<dbReference type="PANTHER" id="PTHR43181">
    <property type="entry name" value="2-C-METHYL-D-ERYTHRITOL 2,4-CYCLODIPHOSPHATE SYNTHASE, CHLOROPLASTIC"/>
    <property type="match status" value="1"/>
</dbReference>
<dbReference type="PANTHER" id="PTHR43181:SF1">
    <property type="entry name" value="2-C-METHYL-D-ERYTHRITOL 2,4-CYCLODIPHOSPHATE SYNTHASE, CHLOROPLASTIC"/>
    <property type="match status" value="1"/>
</dbReference>
<dbReference type="Pfam" id="PF02542">
    <property type="entry name" value="YgbB"/>
    <property type="match status" value="1"/>
</dbReference>
<dbReference type="SUPFAM" id="SSF69765">
    <property type="entry name" value="IpsF-like"/>
    <property type="match status" value="1"/>
</dbReference>
<dbReference type="PROSITE" id="PS01350">
    <property type="entry name" value="ISPF"/>
    <property type="match status" value="1"/>
</dbReference>
<organism>
    <name type="scientific">Escherichia coli O7:K1 (strain IAI39 / ExPEC)</name>
    <dbReference type="NCBI Taxonomy" id="585057"/>
    <lineage>
        <taxon>Bacteria</taxon>
        <taxon>Pseudomonadati</taxon>
        <taxon>Pseudomonadota</taxon>
        <taxon>Gammaproteobacteria</taxon>
        <taxon>Enterobacterales</taxon>
        <taxon>Enterobacteriaceae</taxon>
        <taxon>Escherichia</taxon>
    </lineage>
</organism>
<evidence type="ECO:0000255" key="1">
    <source>
        <dbReference type="HAMAP-Rule" id="MF_00107"/>
    </source>
</evidence>
<proteinExistence type="inferred from homology"/>
<name>ISPF_ECO7I</name>
<accession>B7NT90</accession>
<sequence>MRIGHGFDVHAFGGEGPIIIGGVRIPYEKGLLAHSDGDVALHALTDALLGAAALGDIGKLFPDTDPAFKGADSRELLREAWRRIQAKGYTLGNVDVTIIAQAPKMLPHIPQMRVFIAEDLGCHMDDVNVKATTTEKLGFTGRGEGIACEAVALLIKATK</sequence>
<keyword id="KW-0414">Isoprene biosynthesis</keyword>
<keyword id="KW-0456">Lyase</keyword>
<keyword id="KW-0479">Metal-binding</keyword>
<reference key="1">
    <citation type="journal article" date="2009" name="PLoS Genet.">
        <title>Organised genome dynamics in the Escherichia coli species results in highly diverse adaptive paths.</title>
        <authorList>
            <person name="Touchon M."/>
            <person name="Hoede C."/>
            <person name="Tenaillon O."/>
            <person name="Barbe V."/>
            <person name="Baeriswyl S."/>
            <person name="Bidet P."/>
            <person name="Bingen E."/>
            <person name="Bonacorsi S."/>
            <person name="Bouchier C."/>
            <person name="Bouvet O."/>
            <person name="Calteau A."/>
            <person name="Chiapello H."/>
            <person name="Clermont O."/>
            <person name="Cruveiller S."/>
            <person name="Danchin A."/>
            <person name="Diard M."/>
            <person name="Dossat C."/>
            <person name="Karoui M.E."/>
            <person name="Frapy E."/>
            <person name="Garry L."/>
            <person name="Ghigo J.M."/>
            <person name="Gilles A.M."/>
            <person name="Johnson J."/>
            <person name="Le Bouguenec C."/>
            <person name="Lescat M."/>
            <person name="Mangenot S."/>
            <person name="Martinez-Jehanne V."/>
            <person name="Matic I."/>
            <person name="Nassif X."/>
            <person name="Oztas S."/>
            <person name="Petit M.A."/>
            <person name="Pichon C."/>
            <person name="Rouy Z."/>
            <person name="Ruf C.S."/>
            <person name="Schneider D."/>
            <person name="Tourret J."/>
            <person name="Vacherie B."/>
            <person name="Vallenet D."/>
            <person name="Medigue C."/>
            <person name="Rocha E.P.C."/>
            <person name="Denamur E."/>
        </authorList>
    </citation>
    <scope>NUCLEOTIDE SEQUENCE [LARGE SCALE GENOMIC DNA]</scope>
    <source>
        <strain>IAI39 / ExPEC</strain>
    </source>
</reference>
<feature type="chain" id="PRO_1000117426" description="2-C-methyl-D-erythritol 2,4-cyclodiphosphate synthase">
    <location>
        <begin position="1"/>
        <end position="159"/>
    </location>
</feature>
<feature type="binding site" evidence="1">
    <location>
        <begin position="8"/>
        <end position="10"/>
    </location>
    <ligand>
        <name>4-CDP-2-C-methyl-D-erythritol 2-phosphate</name>
        <dbReference type="ChEBI" id="CHEBI:57919"/>
    </ligand>
</feature>
<feature type="binding site" evidence="1">
    <location>
        <position position="8"/>
    </location>
    <ligand>
        <name>a divalent metal cation</name>
        <dbReference type="ChEBI" id="CHEBI:60240"/>
    </ligand>
</feature>
<feature type="binding site" evidence="1">
    <location>
        <position position="10"/>
    </location>
    <ligand>
        <name>a divalent metal cation</name>
        <dbReference type="ChEBI" id="CHEBI:60240"/>
    </ligand>
</feature>
<feature type="binding site" evidence="1">
    <location>
        <begin position="34"/>
        <end position="35"/>
    </location>
    <ligand>
        <name>4-CDP-2-C-methyl-D-erythritol 2-phosphate</name>
        <dbReference type="ChEBI" id="CHEBI:57919"/>
    </ligand>
</feature>
<feature type="binding site" evidence="1">
    <location>
        <position position="42"/>
    </location>
    <ligand>
        <name>a divalent metal cation</name>
        <dbReference type="ChEBI" id="CHEBI:60240"/>
    </ligand>
</feature>
<feature type="binding site" evidence="1">
    <location>
        <begin position="56"/>
        <end position="58"/>
    </location>
    <ligand>
        <name>4-CDP-2-C-methyl-D-erythritol 2-phosphate</name>
        <dbReference type="ChEBI" id="CHEBI:57919"/>
    </ligand>
</feature>
<feature type="binding site" evidence="1">
    <location>
        <begin position="61"/>
        <end position="65"/>
    </location>
    <ligand>
        <name>4-CDP-2-C-methyl-D-erythritol 2-phosphate</name>
        <dbReference type="ChEBI" id="CHEBI:57919"/>
    </ligand>
</feature>
<feature type="binding site" evidence="1">
    <location>
        <begin position="100"/>
        <end position="106"/>
    </location>
    <ligand>
        <name>4-CDP-2-C-methyl-D-erythritol 2-phosphate</name>
        <dbReference type="ChEBI" id="CHEBI:57919"/>
    </ligand>
</feature>
<feature type="binding site" evidence="1">
    <location>
        <begin position="132"/>
        <end position="135"/>
    </location>
    <ligand>
        <name>4-CDP-2-C-methyl-D-erythritol 2-phosphate</name>
        <dbReference type="ChEBI" id="CHEBI:57919"/>
    </ligand>
</feature>
<feature type="binding site" evidence="1">
    <location>
        <position position="139"/>
    </location>
    <ligand>
        <name>4-CDP-2-C-methyl-D-erythritol 2-phosphate</name>
        <dbReference type="ChEBI" id="CHEBI:57919"/>
    </ligand>
</feature>
<feature type="binding site" evidence="1">
    <location>
        <position position="142"/>
    </location>
    <ligand>
        <name>4-CDP-2-C-methyl-D-erythritol 2-phosphate</name>
        <dbReference type="ChEBI" id="CHEBI:57919"/>
    </ligand>
</feature>
<feature type="site" description="Transition state stabilizer" evidence="1">
    <location>
        <position position="34"/>
    </location>
</feature>
<feature type="site" description="Transition state stabilizer" evidence="1">
    <location>
        <position position="133"/>
    </location>
</feature>
<comment type="function">
    <text evidence="1">Involved in the biosynthesis of isopentenyl diphosphate (IPP) and dimethylallyl diphosphate (DMAPP), two major building blocks of isoprenoid compounds. Catalyzes the conversion of 4-diphosphocytidyl-2-C-methyl-D-erythritol 2-phosphate (CDP-ME2P) to 2-C-methyl-D-erythritol 2,4-cyclodiphosphate (ME-CPP) with a corresponding release of cytidine 5-monophosphate (CMP).</text>
</comment>
<comment type="catalytic activity">
    <reaction evidence="1">
        <text>4-CDP-2-C-methyl-D-erythritol 2-phosphate = 2-C-methyl-D-erythritol 2,4-cyclic diphosphate + CMP</text>
        <dbReference type="Rhea" id="RHEA:23864"/>
        <dbReference type="ChEBI" id="CHEBI:57919"/>
        <dbReference type="ChEBI" id="CHEBI:58483"/>
        <dbReference type="ChEBI" id="CHEBI:60377"/>
        <dbReference type="EC" id="4.6.1.12"/>
    </reaction>
</comment>
<comment type="cofactor">
    <cofactor evidence="1">
        <name>a divalent metal cation</name>
        <dbReference type="ChEBI" id="CHEBI:60240"/>
    </cofactor>
    <text evidence="1">Binds 1 divalent metal cation per subunit.</text>
</comment>
<comment type="pathway">
    <text evidence="1">Isoprenoid biosynthesis; isopentenyl diphosphate biosynthesis via DXP pathway; isopentenyl diphosphate from 1-deoxy-D-xylulose 5-phosphate: step 4/6.</text>
</comment>
<comment type="subunit">
    <text evidence="1">Homotrimer.</text>
</comment>
<comment type="similarity">
    <text evidence="1">Belongs to the IspF family.</text>
</comment>
<protein>
    <recommendedName>
        <fullName evidence="1">2-C-methyl-D-erythritol 2,4-cyclodiphosphate synthase</fullName>
        <shortName evidence="1">MECDP-synthase</shortName>
        <shortName evidence="1">MECPP-synthase</shortName>
        <shortName evidence="1">MECPS</shortName>
        <ecNumber evidence="1">4.6.1.12</ecNumber>
    </recommendedName>
</protein>
<gene>
    <name evidence="1" type="primary">ispF</name>
    <name type="ordered locus">ECIAI39_2935</name>
</gene>